<sequence length="401" mass="46192">MNKWLCCALLVFLDIIEWTTQETFPPKYLHYDPETGRQLLCDKCAPGTYLKQHCTVRRKTLCVPCPDYSYTDSWHTSDECVYCSPVCKELQTVKQECNRTHNRVCECEEGRYLELEFCLKHRSCPPGLGVLQAGTPERNTVCKRCPDGFFSGETSSKAPCRKHTNCSSLGLLLIQKGNATHDNVCSGNREATQNCGIDVTLCEEAFFRFAVPTKIIPNWLSVLVDSLPGTKVNAESVERIKRRHSSQEQTFQLLKLWKHQNRDQEMVKKIIQDIDLCESSVQRHIGHANLTTEQLRILMESLPGKKISPDEIERTRKTCKPSEQLLKLLSLWRIKNGDQDTLKGLMYALKHLKAYHFPKTVTHSLRKTIRFLHSFTMYRLYQKLFLEMIGNQVQSVKISCL</sequence>
<gene>
    <name type="primary">Tnfrsf11b</name>
    <name type="synonym">Opg</name>
</gene>
<feature type="signal peptide" evidence="1">
    <location>
        <begin position="1"/>
        <end position="21"/>
    </location>
</feature>
<feature type="chain" id="PRO_0000034589" description="Tumor necrosis factor receptor superfamily member 11B">
    <location>
        <begin position="22"/>
        <end position="401"/>
    </location>
</feature>
<feature type="repeat" description="TNFR-Cys 1">
    <location>
        <begin position="24"/>
        <end position="62"/>
    </location>
</feature>
<feature type="repeat" description="TNFR-Cys 2">
    <location>
        <begin position="65"/>
        <end position="105"/>
    </location>
</feature>
<feature type="repeat" description="TNFR-Cys 3">
    <location>
        <begin position="107"/>
        <end position="142"/>
    </location>
</feature>
<feature type="repeat" description="TNFR-Cys 4">
    <location>
        <begin position="145"/>
        <end position="185"/>
    </location>
</feature>
<feature type="domain" description="Death 1">
    <location>
        <begin position="198"/>
        <end position="269"/>
    </location>
</feature>
<feature type="domain" description="Death 2">
    <location>
        <begin position="270"/>
        <end position="365"/>
    </location>
</feature>
<feature type="site" description="Involved in dimerization" evidence="1">
    <location>
        <position position="400"/>
    </location>
</feature>
<feature type="glycosylation site" description="N-linked (GlcNAc...) asparagine" evidence="2">
    <location>
        <position position="98"/>
    </location>
</feature>
<feature type="glycosylation site" description="N-linked (GlcNAc...) asparagine" evidence="2">
    <location>
        <position position="165"/>
    </location>
</feature>
<feature type="glycosylation site" description="N-linked (GlcNAc...) asparagine" evidence="2">
    <location>
        <position position="178"/>
    </location>
</feature>
<feature type="glycosylation site" description="N-linked (GlcNAc...) asparagine" evidence="2">
    <location>
        <position position="289"/>
    </location>
</feature>
<feature type="disulfide bond" evidence="3">
    <location>
        <begin position="41"/>
        <end position="54"/>
    </location>
</feature>
<feature type="disulfide bond" evidence="3">
    <location>
        <begin position="44"/>
        <end position="62"/>
    </location>
</feature>
<feature type="disulfide bond" evidence="3">
    <location>
        <begin position="65"/>
        <end position="80"/>
    </location>
</feature>
<feature type="disulfide bond" evidence="3">
    <location>
        <begin position="83"/>
        <end position="97"/>
    </location>
</feature>
<feature type="disulfide bond" evidence="3">
    <location>
        <begin position="87"/>
        <end position="105"/>
    </location>
</feature>
<feature type="disulfide bond" evidence="3">
    <location>
        <begin position="107"/>
        <end position="118"/>
    </location>
</feature>
<feature type="disulfide bond" evidence="3">
    <location>
        <begin position="124"/>
        <end position="142"/>
    </location>
</feature>
<feature type="disulfide bond" evidence="3">
    <location>
        <begin position="145"/>
        <end position="160"/>
    </location>
</feature>
<feature type="disulfide bond" evidence="3">
    <location>
        <begin position="166"/>
        <end position="185"/>
    </location>
</feature>
<comment type="function">
    <text evidence="1">Acts as a decoy receptor for TNFSF11/RANKL and thereby neutralizes its function in osteoclastogenesis. Inhibits the activation of osteoclasts and promotes osteoclast apoptosis in vitro. Bone homeostasis seems to depend on the local ratio between TNFSF11 and TNFRSF11B. May also play a role in preventing arterial calcification. May act as decoy receptor for TNFSF10/TRAIL and protect against apoptosis. TNFSF10/TRAIL binding blocks the inhibition of osteoclastogenesis (By similarity).</text>
</comment>
<comment type="subunit">
    <text evidence="1">Homodimer. Interacts with TNFSF10 and TNFSF11 (By similarity).</text>
</comment>
<comment type="subcellular location">
    <subcellularLocation>
        <location evidence="1">Secreted</location>
    </subcellularLocation>
</comment>
<comment type="induction">
    <text>Up-regulated by osteopontin.</text>
</comment>
<reference key="1">
    <citation type="journal article" date="1997" name="Cell">
        <title>Osteoprotegerin: a novel secreted protein involved in the regulation of bone density.</title>
        <authorList>
            <person name="Simonet W.S."/>
            <person name="Lacey D.L."/>
            <person name="Dunstan C.R."/>
            <person name="Kelley M."/>
            <person name="Chang M.-S."/>
            <person name="Luethy R."/>
            <person name="Nguyen H.Q."/>
            <person name="Wooden S."/>
            <person name="Bennett L."/>
            <person name="Boone T."/>
            <person name="Shimamoto G."/>
            <person name="Derose M."/>
            <person name="Elliott R."/>
            <person name="Colombero A."/>
            <person name="Tan H.-L."/>
            <person name="Trail G."/>
            <person name="Sullivan J."/>
            <person name="Davy E."/>
            <person name="Bucay N."/>
            <person name="Renshaw-Gegg L."/>
            <person name="Hughes T.M."/>
            <person name="Hill D."/>
            <person name="Pattison W."/>
            <person name="Campbell P."/>
            <person name="Sander S."/>
            <person name="Van G."/>
            <person name="Tarpley J."/>
            <person name="Derby P."/>
            <person name="Lee R."/>
            <person name="Suggs S."/>
            <person name="Boyle W.J."/>
        </authorList>
    </citation>
    <scope>NUCLEOTIDE SEQUENCE [MRNA]</scope>
    <source>
        <tissue>Embryonic intestine</tissue>
    </source>
</reference>
<reference key="2">
    <citation type="journal article" date="2004" name="Genome Res.">
        <title>The status, quality, and expansion of the NIH full-length cDNA project: the Mammalian Gene Collection (MGC).</title>
        <authorList>
            <consortium name="The MGC Project Team"/>
        </authorList>
    </citation>
    <scope>NUCLEOTIDE SEQUENCE [LARGE SCALE MRNA]</scope>
    <source>
        <tissue>Lung</tissue>
    </source>
</reference>
<accession>O08727</accession>
<proteinExistence type="evidence at transcript level"/>
<keyword id="KW-0053">Apoptosis</keyword>
<keyword id="KW-0202">Cytokine</keyword>
<keyword id="KW-1015">Disulfide bond</keyword>
<keyword id="KW-0325">Glycoprotein</keyword>
<keyword id="KW-1185">Reference proteome</keyword>
<keyword id="KW-0677">Repeat</keyword>
<keyword id="KW-0964">Secreted</keyword>
<keyword id="KW-0732">Signal</keyword>
<name>TR11B_RAT</name>
<protein>
    <recommendedName>
        <fullName>Tumor necrosis factor receptor superfamily member 11B</fullName>
    </recommendedName>
    <alternativeName>
        <fullName>Osteoprotegerin</fullName>
    </alternativeName>
</protein>
<organism>
    <name type="scientific">Rattus norvegicus</name>
    <name type="common">Rat</name>
    <dbReference type="NCBI Taxonomy" id="10116"/>
    <lineage>
        <taxon>Eukaryota</taxon>
        <taxon>Metazoa</taxon>
        <taxon>Chordata</taxon>
        <taxon>Craniata</taxon>
        <taxon>Vertebrata</taxon>
        <taxon>Euteleostomi</taxon>
        <taxon>Mammalia</taxon>
        <taxon>Eutheria</taxon>
        <taxon>Euarchontoglires</taxon>
        <taxon>Glires</taxon>
        <taxon>Rodentia</taxon>
        <taxon>Myomorpha</taxon>
        <taxon>Muroidea</taxon>
        <taxon>Muridae</taxon>
        <taxon>Murinae</taxon>
        <taxon>Rattus</taxon>
    </lineage>
</organism>
<evidence type="ECO:0000250" key="1"/>
<evidence type="ECO:0000255" key="2"/>
<evidence type="ECO:0000255" key="3">
    <source>
        <dbReference type="PROSITE-ProRule" id="PRU00206"/>
    </source>
</evidence>
<dbReference type="EMBL" id="U94330">
    <property type="protein sequence ID" value="AAB53707.1"/>
    <property type="molecule type" value="mRNA"/>
</dbReference>
<dbReference type="EMBL" id="BC081830">
    <property type="protein sequence ID" value="AAH81830.1"/>
    <property type="molecule type" value="mRNA"/>
</dbReference>
<dbReference type="RefSeq" id="NP_037002.1">
    <property type="nucleotide sequence ID" value="NM_012870.2"/>
</dbReference>
<dbReference type="SMR" id="O08727"/>
<dbReference type="FunCoup" id="O08727">
    <property type="interactions" value="1065"/>
</dbReference>
<dbReference type="STRING" id="10116.ENSRNOP00000011344"/>
<dbReference type="GlyCosmos" id="O08727">
    <property type="glycosylation" value="4 sites, No reported glycans"/>
</dbReference>
<dbReference type="GlyGen" id="O08727">
    <property type="glycosylation" value="4 sites"/>
</dbReference>
<dbReference type="PhosphoSitePlus" id="O08727"/>
<dbReference type="PaxDb" id="10116-ENSRNOP00000011344"/>
<dbReference type="Ensembl" id="ENSRNOT00000011344.6">
    <property type="protein sequence ID" value="ENSRNOP00000011344.3"/>
    <property type="gene ID" value="ENSRNOG00000008336.7"/>
</dbReference>
<dbReference type="GeneID" id="25341"/>
<dbReference type="KEGG" id="rno:25341"/>
<dbReference type="UCSC" id="RGD:619802">
    <property type="organism name" value="rat"/>
</dbReference>
<dbReference type="AGR" id="RGD:619802"/>
<dbReference type="CTD" id="4982"/>
<dbReference type="RGD" id="619802">
    <property type="gene designation" value="Tnfrsf11b"/>
</dbReference>
<dbReference type="eggNOG" id="ENOG502QVRT">
    <property type="taxonomic scope" value="Eukaryota"/>
</dbReference>
<dbReference type="GeneTree" id="ENSGT00940000155167"/>
<dbReference type="HOGENOM" id="CLU_057708_0_0_1"/>
<dbReference type="InParanoid" id="O08727"/>
<dbReference type="OMA" id="TICKRCP"/>
<dbReference type="OrthoDB" id="8710478at2759"/>
<dbReference type="PhylomeDB" id="O08727"/>
<dbReference type="TreeFam" id="TF331157"/>
<dbReference type="Reactome" id="R-RNO-5669034">
    <property type="pathway name" value="TNFs bind their physiological receptors"/>
</dbReference>
<dbReference type="PRO" id="PR:O08727"/>
<dbReference type="Proteomes" id="UP000002494">
    <property type="component" value="Chromosome 7"/>
</dbReference>
<dbReference type="Bgee" id="ENSRNOG00000008336">
    <property type="expression patterns" value="Expressed in esophagus and 17 other cell types or tissues"/>
</dbReference>
<dbReference type="GO" id="GO:0031012">
    <property type="term" value="C:extracellular matrix"/>
    <property type="evidence" value="ECO:0000266"/>
    <property type="project" value="RGD"/>
</dbReference>
<dbReference type="GO" id="GO:0005615">
    <property type="term" value="C:extracellular space"/>
    <property type="evidence" value="ECO:0000314"/>
    <property type="project" value="RGD"/>
</dbReference>
<dbReference type="GO" id="GO:0043235">
    <property type="term" value="C:receptor complex"/>
    <property type="evidence" value="ECO:0000266"/>
    <property type="project" value="RGD"/>
</dbReference>
<dbReference type="GO" id="GO:0005125">
    <property type="term" value="F:cytokine activity"/>
    <property type="evidence" value="ECO:0007669"/>
    <property type="project" value="UniProtKB-KW"/>
</dbReference>
<dbReference type="GO" id="GO:1904399">
    <property type="term" value="F:heparan sulfate binding"/>
    <property type="evidence" value="ECO:0000266"/>
    <property type="project" value="RGD"/>
</dbReference>
<dbReference type="GO" id="GO:0006915">
    <property type="term" value="P:apoptotic process"/>
    <property type="evidence" value="ECO:0007669"/>
    <property type="project" value="UniProtKB-KW"/>
</dbReference>
<dbReference type="GO" id="GO:0030198">
    <property type="term" value="P:extracellular matrix organization"/>
    <property type="evidence" value="ECO:0000266"/>
    <property type="project" value="RGD"/>
</dbReference>
<dbReference type="GO" id="GO:0045779">
    <property type="term" value="P:negative regulation of bone resorption"/>
    <property type="evidence" value="ECO:0000314"/>
    <property type="project" value="RGD"/>
</dbReference>
<dbReference type="GO" id="GO:0042489">
    <property type="term" value="P:negative regulation of odontogenesis of dentin-containing tooth"/>
    <property type="evidence" value="ECO:0000270"/>
    <property type="project" value="RGD"/>
</dbReference>
<dbReference type="GO" id="GO:0045671">
    <property type="term" value="P:negative regulation of osteoclast differentiation"/>
    <property type="evidence" value="ECO:0000266"/>
    <property type="project" value="RGD"/>
</dbReference>
<dbReference type="GO" id="GO:0010804">
    <property type="term" value="P:negative regulation of tumor necrosis factor-mediated signaling pathway"/>
    <property type="evidence" value="ECO:0000266"/>
    <property type="project" value="RGD"/>
</dbReference>
<dbReference type="GO" id="GO:0046685">
    <property type="term" value="P:response to arsenic-containing substance"/>
    <property type="evidence" value="ECO:0000270"/>
    <property type="project" value="RGD"/>
</dbReference>
<dbReference type="GO" id="GO:0043627">
    <property type="term" value="P:response to estrogen"/>
    <property type="evidence" value="ECO:0000270"/>
    <property type="project" value="RGD"/>
</dbReference>
<dbReference type="GO" id="GO:0032026">
    <property type="term" value="P:response to magnesium ion"/>
    <property type="evidence" value="ECO:0000270"/>
    <property type="project" value="RGD"/>
</dbReference>
<dbReference type="GO" id="GO:0007584">
    <property type="term" value="P:response to nutrient"/>
    <property type="evidence" value="ECO:0000270"/>
    <property type="project" value="RGD"/>
</dbReference>
<dbReference type="GO" id="GO:0009410">
    <property type="term" value="P:response to xenobiotic stimulus"/>
    <property type="evidence" value="ECO:0000270"/>
    <property type="project" value="RGD"/>
</dbReference>
<dbReference type="CDD" id="cd01670">
    <property type="entry name" value="Death"/>
    <property type="match status" value="1"/>
</dbReference>
<dbReference type="CDD" id="cd10581">
    <property type="entry name" value="TNFRSF11B"/>
    <property type="match status" value="1"/>
</dbReference>
<dbReference type="FunFam" id="1.10.533.10:FF:000066">
    <property type="entry name" value="Tumor necrosis factor receptor superfamily member 11B"/>
    <property type="match status" value="1"/>
</dbReference>
<dbReference type="FunFam" id="2.10.50.10:FF:000014">
    <property type="entry name" value="Tumor necrosis factor receptor superfamily member 11B"/>
    <property type="match status" value="1"/>
</dbReference>
<dbReference type="FunFam" id="2.10.50.10:FF:000030">
    <property type="entry name" value="Tumor necrosis factor receptor superfamily member 11B"/>
    <property type="match status" value="1"/>
</dbReference>
<dbReference type="Gene3D" id="1.10.533.10">
    <property type="entry name" value="Death Domain, Fas"/>
    <property type="match status" value="1"/>
</dbReference>
<dbReference type="Gene3D" id="2.10.50.10">
    <property type="entry name" value="Tumor Necrosis Factor Receptor, subunit A, domain 2"/>
    <property type="match status" value="3"/>
</dbReference>
<dbReference type="InterPro" id="IPR011029">
    <property type="entry name" value="DEATH-like_dom_sf"/>
</dbReference>
<dbReference type="InterPro" id="IPR000488">
    <property type="entry name" value="Death_dom"/>
</dbReference>
<dbReference type="InterPro" id="IPR001368">
    <property type="entry name" value="TNFR/NGFR_Cys_rich_reg"/>
</dbReference>
<dbReference type="InterPro" id="IPR022323">
    <property type="entry name" value="TNFR_11"/>
</dbReference>
<dbReference type="InterPro" id="IPR017371">
    <property type="entry name" value="TNFR_11B"/>
</dbReference>
<dbReference type="InterPro" id="IPR052459">
    <property type="entry name" value="TNFRSF_decoy_receptor"/>
</dbReference>
<dbReference type="PANTHER" id="PTHR23097">
    <property type="entry name" value="TUMOR NECROSIS FACTOR RECEPTOR SUPERFAMILY MEMBER"/>
    <property type="match status" value="1"/>
</dbReference>
<dbReference type="PANTHER" id="PTHR23097:SF90">
    <property type="entry name" value="TUMOR NECROSIS FACTOR RECEPTOR SUPERFAMILY MEMBER 11B"/>
    <property type="match status" value="1"/>
</dbReference>
<dbReference type="Pfam" id="PF23630">
    <property type="entry name" value="Death_TNFRSF11B"/>
    <property type="match status" value="2"/>
</dbReference>
<dbReference type="Pfam" id="PF00020">
    <property type="entry name" value="TNFR_c6"/>
    <property type="match status" value="3"/>
</dbReference>
<dbReference type="PIRSF" id="PIRSF038065">
    <property type="entry name" value="TNFR_11B"/>
    <property type="match status" value="1"/>
</dbReference>
<dbReference type="PRINTS" id="PR01961">
    <property type="entry name" value="TNFACTORR11"/>
</dbReference>
<dbReference type="PRINTS" id="PR01975">
    <property type="entry name" value="TNFACTORR11B"/>
</dbReference>
<dbReference type="SMART" id="SM00005">
    <property type="entry name" value="DEATH"/>
    <property type="match status" value="1"/>
</dbReference>
<dbReference type="SMART" id="SM01411">
    <property type="entry name" value="Ephrin_rec_like"/>
    <property type="match status" value="2"/>
</dbReference>
<dbReference type="SMART" id="SM00208">
    <property type="entry name" value="TNFR"/>
    <property type="match status" value="4"/>
</dbReference>
<dbReference type="SUPFAM" id="SSF47986">
    <property type="entry name" value="DEATH domain"/>
    <property type="match status" value="2"/>
</dbReference>
<dbReference type="SUPFAM" id="SSF57586">
    <property type="entry name" value="TNF receptor-like"/>
    <property type="match status" value="2"/>
</dbReference>
<dbReference type="PROSITE" id="PS00652">
    <property type="entry name" value="TNFR_NGFR_1"/>
    <property type="match status" value="1"/>
</dbReference>
<dbReference type="PROSITE" id="PS50050">
    <property type="entry name" value="TNFR_NGFR_2"/>
    <property type="match status" value="2"/>
</dbReference>